<organism>
    <name type="scientific">Pongo abelii</name>
    <name type="common">Sumatran orangutan</name>
    <name type="synonym">Pongo pygmaeus abelii</name>
    <dbReference type="NCBI Taxonomy" id="9601"/>
    <lineage>
        <taxon>Eukaryota</taxon>
        <taxon>Metazoa</taxon>
        <taxon>Chordata</taxon>
        <taxon>Craniata</taxon>
        <taxon>Vertebrata</taxon>
        <taxon>Euteleostomi</taxon>
        <taxon>Mammalia</taxon>
        <taxon>Eutheria</taxon>
        <taxon>Euarchontoglires</taxon>
        <taxon>Primates</taxon>
        <taxon>Haplorrhini</taxon>
        <taxon>Catarrhini</taxon>
        <taxon>Hominidae</taxon>
        <taxon>Pongo</taxon>
    </lineage>
</organism>
<proteinExistence type="evidence at transcript level"/>
<gene>
    <name type="primary">ACAD11</name>
</gene>
<name>ACD11_PONAB</name>
<accession>Q5R778</accession>
<accession>Q5RFD1</accession>
<keyword id="KW-0007">Acetylation</keyword>
<keyword id="KW-0274">FAD</keyword>
<keyword id="KW-0276">Fatty acid metabolism</keyword>
<keyword id="KW-0285">Flavoprotein</keyword>
<keyword id="KW-0443">Lipid metabolism</keyword>
<keyword id="KW-0472">Membrane</keyword>
<keyword id="KW-0496">Mitochondrion</keyword>
<keyword id="KW-0560">Oxidoreductase</keyword>
<keyword id="KW-0576">Peroxisome</keyword>
<keyword id="KW-0597">Phosphoprotein</keyword>
<keyword id="KW-1185">Reference proteome</keyword>
<evidence type="ECO:0000250" key="1"/>
<evidence type="ECO:0000250" key="2">
    <source>
        <dbReference type="UniProtKB" id="Q709F0"/>
    </source>
</evidence>
<evidence type="ECO:0000250" key="3">
    <source>
        <dbReference type="UniProtKB" id="Q80XL6"/>
    </source>
</evidence>
<evidence type="ECO:0000305" key="4"/>
<comment type="function">
    <text evidence="2">Acyl-CoA dehydrogenase, that exhibits maximal activity towards saturated C22-CoA. Probably participates in beta-oxydation and energy production but could also play a role in the metabolism of specific fatty acids to control fatty acids composition of cellular lipids in brain.</text>
</comment>
<comment type="catalytic activity">
    <reaction evidence="2">
        <text>a 2,3-saturated acyl-CoA + oxidized [electron-transfer flavoprotein] + H(+) = a (2E)-enoyl-CoA + reduced [electron-transfer flavoprotein]</text>
        <dbReference type="Rhea" id="RHEA:44704"/>
        <dbReference type="Rhea" id="RHEA-COMP:10685"/>
        <dbReference type="Rhea" id="RHEA-COMP:10686"/>
        <dbReference type="ChEBI" id="CHEBI:15378"/>
        <dbReference type="ChEBI" id="CHEBI:57692"/>
        <dbReference type="ChEBI" id="CHEBI:58307"/>
        <dbReference type="ChEBI" id="CHEBI:58856"/>
        <dbReference type="ChEBI" id="CHEBI:65111"/>
    </reaction>
    <physiologicalReaction direction="left-to-right" evidence="2">
        <dbReference type="Rhea" id="RHEA:44705"/>
    </physiologicalReaction>
</comment>
<comment type="catalytic activity">
    <reaction evidence="2">
        <text>docosanoyl-CoA + oxidized [electron-transfer flavoprotein] + H(+) = (2E)-docosenoyl-CoA + reduced [electron-transfer flavoprotein]</text>
        <dbReference type="Rhea" id="RHEA:47228"/>
        <dbReference type="Rhea" id="RHEA-COMP:10685"/>
        <dbReference type="Rhea" id="RHEA-COMP:10686"/>
        <dbReference type="ChEBI" id="CHEBI:15378"/>
        <dbReference type="ChEBI" id="CHEBI:57692"/>
        <dbReference type="ChEBI" id="CHEBI:58307"/>
        <dbReference type="ChEBI" id="CHEBI:65059"/>
        <dbReference type="ChEBI" id="CHEBI:74692"/>
    </reaction>
    <physiologicalReaction direction="left-to-right" evidence="2">
        <dbReference type="Rhea" id="RHEA:47229"/>
    </physiologicalReaction>
</comment>
<comment type="catalytic activity">
    <reaction evidence="2">
        <text>tetracosanoyl-CoA + oxidized [electron-transfer flavoprotein] + H(+) = (2E)-tetracosenoyl-CoA + reduced [electron-transfer flavoprotein]</text>
        <dbReference type="Rhea" id="RHEA:47232"/>
        <dbReference type="Rhea" id="RHEA-COMP:10685"/>
        <dbReference type="Rhea" id="RHEA-COMP:10686"/>
        <dbReference type="ChEBI" id="CHEBI:15378"/>
        <dbReference type="ChEBI" id="CHEBI:57692"/>
        <dbReference type="ChEBI" id="CHEBI:58307"/>
        <dbReference type="ChEBI" id="CHEBI:65052"/>
        <dbReference type="ChEBI" id="CHEBI:74693"/>
    </reaction>
    <physiologicalReaction direction="left-to-right" evidence="2">
        <dbReference type="Rhea" id="RHEA:47233"/>
    </physiologicalReaction>
</comment>
<comment type="catalytic activity">
    <reaction evidence="2">
        <text>eicosanoyl-CoA + oxidized [electron-transfer flavoprotein] + H(+) = (2E)-eicosenoyl-CoA + reduced [electron-transfer flavoprotein]</text>
        <dbReference type="Rhea" id="RHEA:47236"/>
        <dbReference type="Rhea" id="RHEA-COMP:10685"/>
        <dbReference type="Rhea" id="RHEA-COMP:10686"/>
        <dbReference type="ChEBI" id="CHEBI:15378"/>
        <dbReference type="ChEBI" id="CHEBI:57380"/>
        <dbReference type="ChEBI" id="CHEBI:57692"/>
        <dbReference type="ChEBI" id="CHEBI:58307"/>
        <dbReference type="ChEBI" id="CHEBI:74691"/>
    </reaction>
    <physiologicalReaction direction="left-to-right" evidence="2">
        <dbReference type="Rhea" id="RHEA:47237"/>
    </physiologicalReaction>
</comment>
<comment type="catalytic activity">
    <reaction evidence="2">
        <text>hexacosanoyl-CoA + oxidized [electron-transfer flavoprotein] + H(+) = (2E)-hexacosenoyl-CoA + reduced [electron-transfer flavoprotein]</text>
        <dbReference type="Rhea" id="RHEA:48216"/>
        <dbReference type="Rhea" id="RHEA-COMP:10685"/>
        <dbReference type="Rhea" id="RHEA-COMP:10686"/>
        <dbReference type="ChEBI" id="CHEBI:15378"/>
        <dbReference type="ChEBI" id="CHEBI:57692"/>
        <dbReference type="ChEBI" id="CHEBI:58307"/>
        <dbReference type="ChEBI" id="CHEBI:64868"/>
        <dbReference type="ChEBI" id="CHEBI:74281"/>
    </reaction>
    <physiologicalReaction direction="left-to-right" evidence="2">
        <dbReference type="Rhea" id="RHEA:48217"/>
    </physiologicalReaction>
</comment>
<comment type="catalytic activity">
    <reaction evidence="2">
        <text>tricosanoyl-CoA + oxidized [electron-transfer flavoprotein] + H(+) = (2E)-tricosenoyl-CoA + reduced [electron-transfer flavoprotein]</text>
        <dbReference type="Rhea" id="RHEA:48220"/>
        <dbReference type="Rhea" id="RHEA-COMP:10685"/>
        <dbReference type="Rhea" id="RHEA-COMP:10686"/>
        <dbReference type="ChEBI" id="CHEBI:15378"/>
        <dbReference type="ChEBI" id="CHEBI:57692"/>
        <dbReference type="ChEBI" id="CHEBI:58307"/>
        <dbReference type="ChEBI" id="CHEBI:90118"/>
        <dbReference type="ChEBI" id="CHEBI:90119"/>
    </reaction>
    <physiologicalReaction direction="left-to-right" evidence="2">
        <dbReference type="Rhea" id="RHEA:48221"/>
    </physiologicalReaction>
</comment>
<comment type="cofactor">
    <cofactor evidence="2">
        <name>FAD</name>
        <dbReference type="ChEBI" id="CHEBI:57692"/>
    </cofactor>
</comment>
<comment type="pathway">
    <text evidence="2">Lipid metabolism; fatty acid beta-oxidation.</text>
</comment>
<comment type="subunit">
    <text evidence="2">Homodimer.</text>
</comment>
<comment type="subcellular location">
    <subcellularLocation>
        <location evidence="3">Peroxisome</location>
    </subcellularLocation>
    <subcellularLocation>
        <location evidence="2">Mitochondrion membrane</location>
    </subcellularLocation>
</comment>
<comment type="similarity">
    <text evidence="4">Belongs to the acyl-CoA dehydrogenase family.</text>
</comment>
<protein>
    <recommendedName>
        <fullName>Acyl-CoA dehydrogenase family member 11</fullName>
        <shortName>ACAD-11</shortName>
        <ecNumber evidence="2">1.3.8.-</ecNumber>
    </recommendedName>
</protein>
<feature type="chain" id="PRO_0000254147" description="Acyl-CoA dehydrogenase family member 11">
    <location>
        <begin position="1"/>
        <end position="781"/>
    </location>
</feature>
<feature type="binding site" description="in other chain" evidence="1">
    <location>
        <begin position="505"/>
        <end position="515"/>
    </location>
    <ligand>
        <name>FAD</name>
        <dbReference type="ChEBI" id="CHEBI:57692"/>
        <note>ligand shared between dimeric partners</note>
    </ligand>
</feature>
<feature type="binding site" description="in other chain" evidence="1">
    <location>
        <begin position="513"/>
        <end position="515"/>
    </location>
    <ligand>
        <name>FAD</name>
        <dbReference type="ChEBI" id="CHEBI:57692"/>
        <note>ligand shared between dimeric partners</note>
    </ligand>
</feature>
<feature type="binding site" evidence="1">
    <location>
        <position position="515"/>
    </location>
    <ligand>
        <name>substrate</name>
    </ligand>
</feature>
<feature type="binding site" description="in other chain" evidence="1">
    <location>
        <begin position="539"/>
        <end position="541"/>
    </location>
    <ligand>
        <name>FAD</name>
        <dbReference type="ChEBI" id="CHEBI:57692"/>
        <note>ligand shared between dimeric partners</note>
    </ligand>
</feature>
<feature type="binding site" description="in other chain" evidence="1">
    <location>
        <position position="541"/>
    </location>
    <ligand>
        <name>FAD</name>
        <dbReference type="ChEBI" id="CHEBI:57692"/>
        <note>ligand shared between dimeric partners</note>
    </ligand>
</feature>
<feature type="binding site" evidence="1">
    <location>
        <begin position="630"/>
        <end position="633"/>
    </location>
    <ligand>
        <name>substrate</name>
    </ligand>
</feature>
<feature type="binding site" evidence="1">
    <location>
        <position position="658"/>
    </location>
    <ligand>
        <name>FAD</name>
        <dbReference type="ChEBI" id="CHEBI:57692"/>
        <note>ligand shared between dimeric partners</note>
    </ligand>
</feature>
<feature type="binding site" evidence="1">
    <location>
        <begin position="728"/>
        <end position="732"/>
    </location>
    <ligand>
        <name>FAD</name>
        <dbReference type="ChEBI" id="CHEBI:57692"/>
        <note>ligand shared between dimeric partners</note>
    </ligand>
</feature>
<feature type="binding site" description="in other chain" evidence="1">
    <location>
        <position position="728"/>
    </location>
    <ligand>
        <name>FAD</name>
        <dbReference type="ChEBI" id="CHEBI:57692"/>
        <note>ligand shared between dimeric partners</note>
    </ligand>
</feature>
<feature type="binding site" evidence="1">
    <location>
        <position position="756"/>
    </location>
    <ligand>
        <name>substrate</name>
    </ligand>
</feature>
<feature type="binding site" description="in other chain" evidence="1">
    <location>
        <begin position="757"/>
        <end position="759"/>
    </location>
    <ligand>
        <name>FAD</name>
        <dbReference type="ChEBI" id="CHEBI:57692"/>
        <note>ligand shared between dimeric partners</note>
    </ligand>
</feature>
<feature type="binding site" description="in other chain" evidence="1">
    <location>
        <position position="759"/>
    </location>
    <ligand>
        <name>FAD</name>
        <dbReference type="ChEBI" id="CHEBI:57692"/>
        <note>ligand shared between dimeric partners</note>
    </ligand>
</feature>
<feature type="modified residue" description="N6-acetyllysine" evidence="3">
    <location>
        <position position="177"/>
    </location>
</feature>
<feature type="modified residue" description="Phosphotyrosine" evidence="3">
    <location>
        <position position="325"/>
    </location>
</feature>
<feature type="modified residue" description="N6-succinyllysine" evidence="3">
    <location>
        <position position="392"/>
    </location>
</feature>
<feature type="sequence conflict" description="In Ref. 1; CAH89526." evidence="4" ref="1">
    <original>A</original>
    <variation>T</variation>
    <location>
        <position position="5"/>
    </location>
</feature>
<feature type="sequence conflict" description="In Ref. 1; CAH92382." evidence="4" ref="1">
    <original>V</original>
    <variation>A</variation>
    <location>
        <position position="137"/>
    </location>
</feature>
<feature type="sequence conflict" description="In Ref. 1; CAH89526." evidence="4" ref="1">
    <original>V</original>
    <variation>I</variation>
    <location>
        <position position="723"/>
    </location>
</feature>
<sequence length="781" mass="87355">MKPGATGESDLAEVLPQHKFDSKSLEAYLNQHLSGFGAEREATLTIAQYRAGKSNPTFYLQKGFQTYVLRKKPPGSLLPKAHQIDREFKVQKALFSIGFPVPKPILYCSDTSVIGTEFYIMEHVQGRIFRDLTIPGVSPAERSALYVAIVETLAQLHSLNIQSLQLEGYGIGAGYCKRQVSTWTKQYQAAAHQDIPAMQQLSEWLMKNLPDNDNEENLIHGDFRLDNIIFHPKECRVIAVLDWELSTIGHPLSDLAHFSLFYFWPRTVPMINQGSYSEENSGIPSMEELISIYCRCRGINSSLPNWNFFLALSYFKMAGIAQGVYSRYLLGNNSSEDSFLFANIVQPLAETGLQLSKRTFSTVLPQIDTAGQLFVQTRKGQEVLIKVKHFMKQHILPAEKEVTEFYVQNENSVDKWGKPLVIDKLKEMAKAEGLWNLFLPAVSGLSQVDYALIAEETGKCFFAPDVFNCQAPDTGNMEILHLYGSEEQKKQWLEPLLQGNITSCFCMTEPDVASSDATNIECSIQREEDSYVINGKKWWSSGAGNPKCKIAIVLGRTQNTSLSRHKQHSMILVPMNTPGVEIIRPLSVFGYTDNFHGGHFEIHFNQVRVPATNLILGEGRGFEISQGRLGPGRIHHCMRTVGLAERALQIMCERATQRIAFKKKLYAHEVVAHWIAESRIAIEKIRLLTLKAAHSMDTLGSAGAKKEIAMIKVAAPRAVSKIVDWAIQVCGGAGVSQDYPLANMYAITRVLRLADGPDEVHLSAIATMELRDQAKRLTAKI</sequence>
<reference key="1">
    <citation type="submission" date="2004-11" db="EMBL/GenBank/DDBJ databases">
        <authorList>
            <consortium name="The German cDNA consortium"/>
        </authorList>
    </citation>
    <scope>NUCLEOTIDE SEQUENCE [LARGE SCALE MRNA]</scope>
    <source>
        <tissue>Kidney</tissue>
    </source>
</reference>
<dbReference type="EC" id="1.3.8.-" evidence="2"/>
<dbReference type="EMBL" id="CR857227">
    <property type="protein sequence ID" value="CAH89526.1"/>
    <property type="molecule type" value="mRNA"/>
</dbReference>
<dbReference type="EMBL" id="CR860240">
    <property type="protein sequence ID" value="CAH92382.1"/>
    <property type="molecule type" value="mRNA"/>
</dbReference>
<dbReference type="RefSeq" id="NP_001126403.1">
    <property type="nucleotide sequence ID" value="NM_001132931.2"/>
</dbReference>
<dbReference type="SMR" id="Q5R778"/>
<dbReference type="FunCoup" id="Q5R778">
    <property type="interactions" value="1432"/>
</dbReference>
<dbReference type="STRING" id="9601.ENSPPYP00000015783"/>
<dbReference type="Ensembl" id="ENSPPYT00000016405.3">
    <property type="protein sequence ID" value="ENSPPYP00000015783.2"/>
    <property type="gene ID" value="ENSPPYG00000014106.3"/>
</dbReference>
<dbReference type="GeneID" id="100173386"/>
<dbReference type="KEGG" id="pon:100173386"/>
<dbReference type="CTD" id="84129"/>
<dbReference type="eggNOG" id="KOG1469">
    <property type="taxonomic scope" value="Eukaryota"/>
</dbReference>
<dbReference type="GeneTree" id="ENSGT00940000160993"/>
<dbReference type="HOGENOM" id="CLU_007526_3_0_1"/>
<dbReference type="InParanoid" id="Q5R778"/>
<dbReference type="OMA" id="LHGGHFE"/>
<dbReference type="OrthoDB" id="434771at2759"/>
<dbReference type="TreeFam" id="TF333953"/>
<dbReference type="UniPathway" id="UPA00659"/>
<dbReference type="Proteomes" id="UP000001595">
    <property type="component" value="Chromosome 3"/>
</dbReference>
<dbReference type="GO" id="GO:0031966">
    <property type="term" value="C:mitochondrial membrane"/>
    <property type="evidence" value="ECO:0007669"/>
    <property type="project" value="UniProtKB-SubCell"/>
</dbReference>
<dbReference type="GO" id="GO:0005634">
    <property type="term" value="C:nucleus"/>
    <property type="evidence" value="ECO:0007669"/>
    <property type="project" value="Ensembl"/>
</dbReference>
<dbReference type="GO" id="GO:0005777">
    <property type="term" value="C:peroxisome"/>
    <property type="evidence" value="ECO:0007669"/>
    <property type="project" value="UniProtKB-SubCell"/>
</dbReference>
<dbReference type="GO" id="GO:0050660">
    <property type="term" value="F:flavin adenine dinucleotide binding"/>
    <property type="evidence" value="ECO:0007669"/>
    <property type="project" value="InterPro"/>
</dbReference>
<dbReference type="GO" id="GO:0004466">
    <property type="term" value="F:long-chain fatty acyl-CoA dehydrogenase activity"/>
    <property type="evidence" value="ECO:0007669"/>
    <property type="project" value="Ensembl"/>
</dbReference>
<dbReference type="GO" id="GO:0070991">
    <property type="term" value="F:medium-chain fatty acyl-CoA dehydrogenase activity"/>
    <property type="evidence" value="ECO:0007669"/>
    <property type="project" value="Ensembl"/>
</dbReference>
<dbReference type="GO" id="GO:0017099">
    <property type="term" value="F:very-long-chain fatty acyl-CoA dehydrogenase activity"/>
    <property type="evidence" value="ECO:0007669"/>
    <property type="project" value="Ensembl"/>
</dbReference>
<dbReference type="GO" id="GO:0033539">
    <property type="term" value="P:fatty acid beta-oxidation using acyl-CoA dehydrogenase"/>
    <property type="evidence" value="ECO:0007669"/>
    <property type="project" value="Ensembl"/>
</dbReference>
<dbReference type="CDD" id="cd05154">
    <property type="entry name" value="ACAD10_11_N-like"/>
    <property type="match status" value="1"/>
</dbReference>
<dbReference type="CDD" id="cd01155">
    <property type="entry name" value="ACAD_FadE2"/>
    <property type="match status" value="1"/>
</dbReference>
<dbReference type="FunFam" id="2.40.110.10:FF:000002">
    <property type="entry name" value="Acyl-CoA dehydrogenase fadE12"/>
    <property type="match status" value="1"/>
</dbReference>
<dbReference type="FunFam" id="1.20.140.10:FF:000018">
    <property type="entry name" value="Acyl-CoA dehydrogenase family member 10"/>
    <property type="match status" value="1"/>
</dbReference>
<dbReference type="FunFam" id="3.30.200.20:FF:000343">
    <property type="entry name" value="Acyl-CoA dehydrogenase family member 10"/>
    <property type="match status" value="1"/>
</dbReference>
<dbReference type="FunFam" id="3.90.1200.10:FF:000009">
    <property type="entry name" value="Acyl-CoA dehydrogenase family member 11"/>
    <property type="match status" value="1"/>
</dbReference>
<dbReference type="FunFam" id="1.10.540.10:FF:000016">
    <property type="entry name" value="acyl-CoA dehydrogenase family member 11"/>
    <property type="match status" value="1"/>
</dbReference>
<dbReference type="Gene3D" id="3.90.1200.10">
    <property type="match status" value="1"/>
</dbReference>
<dbReference type="Gene3D" id="1.10.540.10">
    <property type="entry name" value="Acyl-CoA dehydrogenase/oxidase, N-terminal domain"/>
    <property type="match status" value="1"/>
</dbReference>
<dbReference type="Gene3D" id="2.40.110.10">
    <property type="entry name" value="Butyryl-CoA Dehydrogenase, subunit A, domain 2"/>
    <property type="match status" value="1"/>
</dbReference>
<dbReference type="Gene3D" id="1.20.140.10">
    <property type="entry name" value="Butyryl-CoA Dehydrogenase, subunit A, domain 3"/>
    <property type="match status" value="1"/>
</dbReference>
<dbReference type="Gene3D" id="3.30.200.20">
    <property type="entry name" value="Phosphorylase Kinase, domain 1"/>
    <property type="match status" value="1"/>
</dbReference>
<dbReference type="InterPro" id="IPR041726">
    <property type="entry name" value="ACAD10_11_N"/>
</dbReference>
<dbReference type="InterPro" id="IPR050741">
    <property type="entry name" value="Acyl-CoA_dehydrogenase"/>
</dbReference>
<dbReference type="InterPro" id="IPR006091">
    <property type="entry name" value="Acyl-CoA_Oxase/DH_mid-dom"/>
</dbReference>
<dbReference type="InterPro" id="IPR046373">
    <property type="entry name" value="Acyl-CoA_Oxase/DH_mid-dom_sf"/>
</dbReference>
<dbReference type="InterPro" id="IPR036250">
    <property type="entry name" value="AcylCo_DH-like_C"/>
</dbReference>
<dbReference type="InterPro" id="IPR009075">
    <property type="entry name" value="AcylCo_DH/oxidase_C"/>
</dbReference>
<dbReference type="InterPro" id="IPR013786">
    <property type="entry name" value="AcylCoA_DH/ox_N"/>
</dbReference>
<dbReference type="InterPro" id="IPR037069">
    <property type="entry name" value="AcylCoA_DH/ox_N_sf"/>
</dbReference>
<dbReference type="InterPro" id="IPR009100">
    <property type="entry name" value="AcylCoA_DH/oxidase_NM_dom_sf"/>
</dbReference>
<dbReference type="InterPro" id="IPR002575">
    <property type="entry name" value="Aminoglycoside_PTrfase"/>
</dbReference>
<dbReference type="InterPro" id="IPR011009">
    <property type="entry name" value="Kinase-like_dom_sf"/>
</dbReference>
<dbReference type="PANTHER" id="PTHR48083:SF13">
    <property type="entry name" value="ACYL-COA DEHYDROGENASE FAMILY MEMBER 11"/>
    <property type="match status" value="1"/>
</dbReference>
<dbReference type="PANTHER" id="PTHR48083">
    <property type="entry name" value="MEDIUM-CHAIN SPECIFIC ACYL-COA DEHYDROGENASE, MITOCHONDRIAL-RELATED"/>
    <property type="match status" value="1"/>
</dbReference>
<dbReference type="Pfam" id="PF00441">
    <property type="entry name" value="Acyl-CoA_dh_1"/>
    <property type="match status" value="1"/>
</dbReference>
<dbReference type="Pfam" id="PF02770">
    <property type="entry name" value="Acyl-CoA_dh_M"/>
    <property type="match status" value="1"/>
</dbReference>
<dbReference type="Pfam" id="PF02771">
    <property type="entry name" value="Acyl-CoA_dh_N"/>
    <property type="match status" value="1"/>
</dbReference>
<dbReference type="Pfam" id="PF01636">
    <property type="entry name" value="APH"/>
    <property type="match status" value="1"/>
</dbReference>
<dbReference type="SUPFAM" id="SSF47203">
    <property type="entry name" value="Acyl-CoA dehydrogenase C-terminal domain-like"/>
    <property type="match status" value="1"/>
</dbReference>
<dbReference type="SUPFAM" id="SSF56645">
    <property type="entry name" value="Acyl-CoA dehydrogenase NM domain-like"/>
    <property type="match status" value="1"/>
</dbReference>
<dbReference type="SUPFAM" id="SSF56112">
    <property type="entry name" value="Protein kinase-like (PK-like)"/>
    <property type="match status" value="1"/>
</dbReference>